<protein>
    <recommendedName>
        <fullName evidence="1">Small ribosomal subunit protein eS1</fullName>
    </recommendedName>
    <alternativeName>
        <fullName evidence="3">40S ribosomal protein S1</fullName>
    </alternativeName>
</protein>
<proteinExistence type="inferred from homology"/>
<comment type="subunit">
    <text evidence="1">Component of the small ribosomal subunit. Mature ribosomes consist of a small (40S) and a large (60S) subunit. The 40S subunit contains about 33 different proteins and 1 molecule of RNA (18S). The 60S subunit contains about 49 different proteins and 3 molecules of RNA (25S, 5.8S and 5S).</text>
</comment>
<comment type="subcellular location">
    <subcellularLocation>
        <location evidence="1">Cytoplasm</location>
    </subcellularLocation>
</comment>
<comment type="similarity">
    <text evidence="1">Belongs to the eukaryotic ribosomal protein eS1 family.</text>
</comment>
<feature type="initiator methionine" description="Removed" evidence="1">
    <location>
        <position position="1"/>
    </location>
</feature>
<feature type="chain" id="PRO_0000389352" description="Small ribosomal subunit protein eS1">
    <location>
        <begin position="2"/>
        <end position="255"/>
    </location>
</feature>
<feature type="region of interest" description="Disordered" evidence="2">
    <location>
        <begin position="1"/>
        <end position="28"/>
    </location>
</feature>
<feature type="compositionally biased region" description="Basic residues" evidence="2">
    <location>
        <begin position="1"/>
        <end position="18"/>
    </location>
</feature>
<feature type="compositionally biased region" description="Basic and acidic residues" evidence="2">
    <location>
        <begin position="19"/>
        <end position="28"/>
    </location>
</feature>
<feature type="modified residue" description="N-acetylalanine; partial" evidence="1">
    <location>
        <position position="2"/>
    </location>
</feature>
<evidence type="ECO:0000255" key="1">
    <source>
        <dbReference type="HAMAP-Rule" id="MF_03122"/>
    </source>
</evidence>
<evidence type="ECO:0000256" key="2">
    <source>
        <dbReference type="SAM" id="MobiDB-lite"/>
    </source>
</evidence>
<evidence type="ECO:0000305" key="3"/>
<reference key="1">
    <citation type="journal article" date="2009" name="Genome Res.">
        <title>Comparative genomic analyses of the human fungal pathogens Coccidioides and their relatives.</title>
        <authorList>
            <person name="Sharpton T.J."/>
            <person name="Stajich J.E."/>
            <person name="Rounsley S.D."/>
            <person name="Gardner M.J."/>
            <person name="Wortman J.R."/>
            <person name="Jordar V.S."/>
            <person name="Maiti R."/>
            <person name="Kodira C.D."/>
            <person name="Neafsey D.E."/>
            <person name="Zeng Q."/>
            <person name="Hung C.-Y."/>
            <person name="McMahan C."/>
            <person name="Muszewska A."/>
            <person name="Grynberg M."/>
            <person name="Mandel M.A."/>
            <person name="Kellner E.M."/>
            <person name="Barker B.M."/>
            <person name="Galgiani J.N."/>
            <person name="Orbach M.J."/>
            <person name="Kirkland T.N."/>
            <person name="Cole G.T."/>
            <person name="Henn M.R."/>
            <person name="Birren B.W."/>
            <person name="Taylor J.W."/>
        </authorList>
    </citation>
    <scope>NUCLEOTIDE SEQUENCE [LARGE SCALE GENOMIC DNA]</scope>
    <source>
        <strain>NAm1 / WU24</strain>
    </source>
</reference>
<organism>
    <name type="scientific">Ajellomyces capsulatus (strain NAm1 / WU24)</name>
    <name type="common">Darling's disease fungus</name>
    <name type="synonym">Histoplasma capsulatum</name>
    <dbReference type="NCBI Taxonomy" id="2059318"/>
    <lineage>
        <taxon>Eukaryota</taxon>
        <taxon>Fungi</taxon>
        <taxon>Dikarya</taxon>
        <taxon>Ascomycota</taxon>
        <taxon>Pezizomycotina</taxon>
        <taxon>Eurotiomycetes</taxon>
        <taxon>Eurotiomycetidae</taxon>
        <taxon>Onygenales</taxon>
        <taxon>Ajellomycetaceae</taxon>
        <taxon>Histoplasma</taxon>
    </lineage>
</organism>
<accession>A6R9C3</accession>
<keyword id="KW-0007">Acetylation</keyword>
<keyword id="KW-0963">Cytoplasm</keyword>
<keyword id="KW-1185">Reference proteome</keyword>
<keyword id="KW-0687">Ribonucleoprotein</keyword>
<keyword id="KW-0689">Ribosomal protein</keyword>
<name>RS3A_AJECN</name>
<sequence length="255" mass="29060">MAVGKNKRLSKGKKGLKKRTQDPFSRKDEYSVKAPSTFAVRDVGKTLVNRTTGLKNANDSLKGRIFEVSLADLQNDEDHAFRKVKLRVDEVQGKNCLTNFHGLDFTSDKLRSLVRKWQTLIEANVTVKTTDDYLLRLFAIAFTKRRPNQIKKTTYARSSQIRAIRKKITEIIQREASSRTLAQLTKLIPEVIGREIEKSTHGIYPLQNVHIRKVKLLKSPKFDLGALLALHGESSTDDKGQKVEREFKEQVLESV</sequence>
<dbReference type="EMBL" id="CH476660">
    <property type="protein sequence ID" value="EDN09747.1"/>
    <property type="molecule type" value="Genomic_DNA"/>
</dbReference>
<dbReference type="SMR" id="A6R9C3"/>
<dbReference type="STRING" id="339724.A6R9C3"/>
<dbReference type="KEGG" id="aje:HCAG_06914"/>
<dbReference type="VEuPathDB" id="FungiDB:HCAG_06914"/>
<dbReference type="HOGENOM" id="CLU_062507_0_0_1"/>
<dbReference type="OMA" id="TRFKGHE"/>
<dbReference type="OrthoDB" id="5056at299071"/>
<dbReference type="Proteomes" id="UP000009297">
    <property type="component" value="Unassembled WGS sequence"/>
</dbReference>
<dbReference type="GO" id="GO:0022627">
    <property type="term" value="C:cytosolic small ribosomal subunit"/>
    <property type="evidence" value="ECO:0007669"/>
    <property type="project" value="UniProtKB-UniRule"/>
</dbReference>
<dbReference type="GO" id="GO:0003735">
    <property type="term" value="F:structural constituent of ribosome"/>
    <property type="evidence" value="ECO:0007669"/>
    <property type="project" value="UniProtKB-UniRule"/>
</dbReference>
<dbReference type="GO" id="GO:0006412">
    <property type="term" value="P:translation"/>
    <property type="evidence" value="ECO:0007669"/>
    <property type="project" value="UniProtKB-UniRule"/>
</dbReference>
<dbReference type="HAMAP" id="MF_03122">
    <property type="entry name" value="Ribosomal_eS1_euk"/>
    <property type="match status" value="1"/>
</dbReference>
<dbReference type="InterPro" id="IPR001593">
    <property type="entry name" value="Ribosomal_eS1"/>
</dbReference>
<dbReference type="InterPro" id="IPR018281">
    <property type="entry name" value="Ribosomal_eS1_CS"/>
</dbReference>
<dbReference type="InterPro" id="IPR027500">
    <property type="entry name" value="Ribosomal_eS1_euk"/>
</dbReference>
<dbReference type="PANTHER" id="PTHR11830">
    <property type="entry name" value="40S RIBOSOMAL PROTEIN S3A"/>
    <property type="match status" value="1"/>
</dbReference>
<dbReference type="Pfam" id="PF01015">
    <property type="entry name" value="Ribosomal_S3Ae"/>
    <property type="match status" value="1"/>
</dbReference>
<dbReference type="SMART" id="SM01397">
    <property type="entry name" value="Ribosomal_S3Ae"/>
    <property type="match status" value="1"/>
</dbReference>
<dbReference type="PROSITE" id="PS01191">
    <property type="entry name" value="RIBOSOMAL_S3AE"/>
    <property type="match status" value="1"/>
</dbReference>
<gene>
    <name evidence="1" type="primary">RPS1</name>
    <name type="ORF">HCAG_06914</name>
</gene>